<keyword id="KW-0002">3D-structure</keyword>
<keyword id="KW-0024">Alternative initiation</keyword>
<keyword id="KW-0028">Amino-acid biosynthesis</keyword>
<keyword id="KW-0067">ATP-binding</keyword>
<keyword id="KW-0220">Diaminopimelate biosynthesis</keyword>
<keyword id="KW-0418">Kinase</keyword>
<keyword id="KW-0457">Lysine biosynthesis</keyword>
<keyword id="KW-0547">Nucleotide-binding</keyword>
<keyword id="KW-1185">Reference proteome</keyword>
<keyword id="KW-0677">Repeat</keyword>
<keyword id="KW-0791">Threonine biosynthesis</keyword>
<keyword id="KW-0808">Transferase</keyword>
<evidence type="ECO:0000250" key="1"/>
<evidence type="ECO:0000255" key="2">
    <source>
        <dbReference type="PROSITE-ProRule" id="PRU01007"/>
    </source>
</evidence>
<evidence type="ECO:0000269" key="3">
    <source>
    </source>
</evidence>
<evidence type="ECO:0000269" key="4">
    <source>
    </source>
</evidence>
<evidence type="ECO:0000305" key="5"/>
<evidence type="ECO:0007829" key="6">
    <source>
        <dbReference type="PDB" id="3S1T"/>
    </source>
</evidence>
<evidence type="ECO:0007829" key="7">
    <source>
        <dbReference type="PDB" id="4GO5"/>
    </source>
</evidence>
<accession>P9WPX3</accession>
<accession>L0TGI4</accession>
<accession>O69676</accession>
<accession>P0A4Z8</accession>
<accession>P47731</accession>
<accession>P97048</accession>
<accession>P97181</accession>
<dbReference type="EC" id="2.7.2.4"/>
<dbReference type="EMBL" id="U90239">
    <property type="protein sequence ID" value="AAB49995.1"/>
    <property type="molecule type" value="Genomic_DNA"/>
</dbReference>
<dbReference type="EMBL" id="U90239">
    <property type="protein sequence ID" value="AAB49994.1"/>
    <property type="molecule type" value="Genomic_DNA"/>
</dbReference>
<dbReference type="EMBL" id="AL123456">
    <property type="protein sequence ID" value="CCP46535.1"/>
    <property type="molecule type" value="Genomic_DNA"/>
</dbReference>
<dbReference type="PIR" id="F70794">
    <property type="entry name" value="F70794"/>
</dbReference>
<dbReference type="RefSeq" id="NP_218226.1">
    <molecule id="P9WPX3-1"/>
    <property type="nucleotide sequence ID" value="NC_000962.3"/>
</dbReference>
<dbReference type="RefSeq" id="WP_003419828.1">
    <property type="nucleotide sequence ID" value="NZ_NVQJ01000009.1"/>
</dbReference>
<dbReference type="PDB" id="3S1T">
    <property type="method" value="X-ray"/>
    <property type="resolution" value="1.63 A"/>
    <property type="chains" value="A/B=251-421, C=412-421"/>
</dbReference>
<dbReference type="PDB" id="4GO5">
    <property type="method" value="X-ray"/>
    <property type="resolution" value="2.60 A"/>
    <property type="chains" value="X=250-421"/>
</dbReference>
<dbReference type="PDB" id="4GO7">
    <property type="method" value="X-ray"/>
    <property type="resolution" value="2.00 A"/>
    <property type="chains" value="X=250-421"/>
</dbReference>
<dbReference type="PDBsum" id="3S1T"/>
<dbReference type="PDBsum" id="4GO5"/>
<dbReference type="PDBsum" id="4GO7"/>
<dbReference type="SMR" id="P9WPX3"/>
<dbReference type="FunCoup" id="P9WPX3">
    <property type="interactions" value="367"/>
</dbReference>
<dbReference type="STRING" id="83332.Rv3709c"/>
<dbReference type="PaxDb" id="83332-Rv3709c"/>
<dbReference type="DNASU" id="885223"/>
<dbReference type="GeneID" id="885223"/>
<dbReference type="KEGG" id="mtu:Rv3709c"/>
<dbReference type="KEGG" id="mtv:RVBD_3709c"/>
<dbReference type="TubercuList" id="Rv3709c"/>
<dbReference type="eggNOG" id="COG0527">
    <property type="taxonomic scope" value="Bacteria"/>
</dbReference>
<dbReference type="InParanoid" id="P9WPX3"/>
<dbReference type="OrthoDB" id="9799110at2"/>
<dbReference type="PhylomeDB" id="P9WPX3"/>
<dbReference type="BRENDA" id="2.7.2.4">
    <property type="organism ID" value="3445"/>
</dbReference>
<dbReference type="UniPathway" id="UPA00034">
    <property type="reaction ID" value="UER00015"/>
</dbReference>
<dbReference type="UniPathway" id="UPA00050">
    <property type="reaction ID" value="UER00461"/>
</dbReference>
<dbReference type="UniPathway" id="UPA00051">
    <property type="reaction ID" value="UER00462"/>
</dbReference>
<dbReference type="EvolutionaryTrace" id="P9WPX3"/>
<dbReference type="Proteomes" id="UP000001584">
    <property type="component" value="Chromosome"/>
</dbReference>
<dbReference type="GO" id="GO:0005829">
    <property type="term" value="C:cytosol"/>
    <property type="evidence" value="ECO:0000318"/>
    <property type="project" value="GO_Central"/>
</dbReference>
<dbReference type="GO" id="GO:0009274">
    <property type="term" value="C:peptidoglycan-based cell wall"/>
    <property type="evidence" value="ECO:0007005"/>
    <property type="project" value="MTBBASE"/>
</dbReference>
<dbReference type="GO" id="GO:0005886">
    <property type="term" value="C:plasma membrane"/>
    <property type="evidence" value="ECO:0007005"/>
    <property type="project" value="MTBBASE"/>
</dbReference>
<dbReference type="GO" id="GO:0004072">
    <property type="term" value="F:aspartate kinase activity"/>
    <property type="evidence" value="ECO:0000314"/>
    <property type="project" value="MTBBASE"/>
</dbReference>
<dbReference type="GO" id="GO:0005524">
    <property type="term" value="F:ATP binding"/>
    <property type="evidence" value="ECO:0007669"/>
    <property type="project" value="UniProtKB-KW"/>
</dbReference>
<dbReference type="GO" id="GO:0019877">
    <property type="term" value="P:diaminopimelate biosynthetic process"/>
    <property type="evidence" value="ECO:0000314"/>
    <property type="project" value="MTBBASE"/>
</dbReference>
<dbReference type="GO" id="GO:0009090">
    <property type="term" value="P:homoserine biosynthetic process"/>
    <property type="evidence" value="ECO:0000318"/>
    <property type="project" value="GO_Central"/>
</dbReference>
<dbReference type="GO" id="GO:0009089">
    <property type="term" value="P:lysine biosynthetic process via diaminopimelate"/>
    <property type="evidence" value="ECO:0000314"/>
    <property type="project" value="MTBBASE"/>
</dbReference>
<dbReference type="GO" id="GO:0009088">
    <property type="term" value="P:threonine biosynthetic process"/>
    <property type="evidence" value="ECO:0007669"/>
    <property type="project" value="UniProtKB-UniPathway"/>
</dbReference>
<dbReference type="CDD" id="cd04261">
    <property type="entry name" value="AAK_AKii-LysC-BS"/>
    <property type="match status" value="1"/>
</dbReference>
<dbReference type="CDD" id="cd04923">
    <property type="entry name" value="ACT_AK-LysC-DapG-like_2"/>
    <property type="match status" value="1"/>
</dbReference>
<dbReference type="CDD" id="cd04913">
    <property type="entry name" value="ACT_AKii-LysC-BS-like_1"/>
    <property type="match status" value="1"/>
</dbReference>
<dbReference type="FunFam" id="3.30.2130.10:FF:000002">
    <property type="entry name" value="Aspartokinase"/>
    <property type="match status" value="1"/>
</dbReference>
<dbReference type="FunFam" id="3.40.1160.10:FF:000002">
    <property type="entry name" value="Aspartokinase"/>
    <property type="match status" value="1"/>
</dbReference>
<dbReference type="Gene3D" id="3.40.1160.10">
    <property type="entry name" value="Acetylglutamate kinase-like"/>
    <property type="match status" value="1"/>
</dbReference>
<dbReference type="Gene3D" id="3.30.2130.10">
    <property type="entry name" value="VC0802-like"/>
    <property type="match status" value="1"/>
</dbReference>
<dbReference type="InterPro" id="IPR036393">
    <property type="entry name" value="AceGlu_kinase-like_sf"/>
</dbReference>
<dbReference type="InterPro" id="IPR045865">
    <property type="entry name" value="ACT-like_dom_sf"/>
</dbReference>
<dbReference type="InterPro" id="IPR054352">
    <property type="entry name" value="ACT_Aspartokinase"/>
</dbReference>
<dbReference type="InterPro" id="IPR002912">
    <property type="entry name" value="ACT_dom"/>
</dbReference>
<dbReference type="InterPro" id="IPR041740">
    <property type="entry name" value="AKii-LysC-BS"/>
</dbReference>
<dbReference type="InterPro" id="IPR001048">
    <property type="entry name" value="Asp/Glu/Uridylate_kinase"/>
</dbReference>
<dbReference type="InterPro" id="IPR005260">
    <property type="entry name" value="Asp_kin_monofn"/>
</dbReference>
<dbReference type="InterPro" id="IPR001341">
    <property type="entry name" value="Asp_kinase"/>
</dbReference>
<dbReference type="InterPro" id="IPR018042">
    <property type="entry name" value="Aspartate_kinase_CS"/>
</dbReference>
<dbReference type="NCBIfam" id="TIGR00656">
    <property type="entry name" value="asp_kin_monofn"/>
    <property type="match status" value="1"/>
</dbReference>
<dbReference type="NCBIfam" id="TIGR00657">
    <property type="entry name" value="asp_kinases"/>
    <property type="match status" value="1"/>
</dbReference>
<dbReference type="NCBIfam" id="NF005153">
    <property type="entry name" value="PRK06635.1-1"/>
    <property type="match status" value="1"/>
</dbReference>
<dbReference type="NCBIfam" id="NF005154">
    <property type="entry name" value="PRK06635.1-2"/>
    <property type="match status" value="1"/>
</dbReference>
<dbReference type="NCBIfam" id="NF005155">
    <property type="entry name" value="PRK06635.1-4"/>
    <property type="match status" value="1"/>
</dbReference>
<dbReference type="PANTHER" id="PTHR21499">
    <property type="entry name" value="ASPARTATE KINASE"/>
    <property type="match status" value="1"/>
</dbReference>
<dbReference type="PANTHER" id="PTHR21499:SF3">
    <property type="entry name" value="ASPARTOKINASE"/>
    <property type="match status" value="1"/>
</dbReference>
<dbReference type="Pfam" id="PF00696">
    <property type="entry name" value="AA_kinase"/>
    <property type="match status" value="1"/>
</dbReference>
<dbReference type="Pfam" id="PF01842">
    <property type="entry name" value="ACT"/>
    <property type="match status" value="1"/>
</dbReference>
<dbReference type="Pfam" id="PF22468">
    <property type="entry name" value="ACT_9"/>
    <property type="match status" value="1"/>
</dbReference>
<dbReference type="PIRSF" id="PIRSF000726">
    <property type="entry name" value="Asp_kin"/>
    <property type="match status" value="1"/>
</dbReference>
<dbReference type="SUPFAM" id="SSF55021">
    <property type="entry name" value="ACT-like"/>
    <property type="match status" value="2"/>
</dbReference>
<dbReference type="SUPFAM" id="SSF53633">
    <property type="entry name" value="Carbamate kinase-like"/>
    <property type="match status" value="1"/>
</dbReference>
<dbReference type="PROSITE" id="PS51671">
    <property type="entry name" value="ACT"/>
    <property type="match status" value="1"/>
</dbReference>
<dbReference type="PROSITE" id="PS00324">
    <property type="entry name" value="ASPARTOKINASE"/>
    <property type="match status" value="1"/>
</dbReference>
<proteinExistence type="evidence at protein level"/>
<reference key="1">
    <citation type="submission" date="1997-02" db="EMBL/GenBank/DDBJ databases">
        <title>Mycobacterium tuberculosis ask-alpha, ask-beta and asd genes.</title>
        <authorList>
            <person name="Gilker J.M."/>
            <person name="Jucker M.T."/>
        </authorList>
    </citation>
    <scope>NUCLEOTIDE SEQUENCE [GENOMIC DNA]</scope>
    <source>
        <strain>ATCC 25618 / H37Rv</strain>
    </source>
</reference>
<reference key="2">
    <citation type="journal article" date="1998" name="Nature">
        <title>Deciphering the biology of Mycobacterium tuberculosis from the complete genome sequence.</title>
        <authorList>
            <person name="Cole S.T."/>
            <person name="Brosch R."/>
            <person name="Parkhill J."/>
            <person name="Garnier T."/>
            <person name="Churcher C.M."/>
            <person name="Harris D.E."/>
            <person name="Gordon S.V."/>
            <person name="Eiglmeier K."/>
            <person name="Gas S."/>
            <person name="Barry C.E. III"/>
            <person name="Tekaia F."/>
            <person name="Badcock K."/>
            <person name="Basham D."/>
            <person name="Brown D."/>
            <person name="Chillingworth T."/>
            <person name="Connor R."/>
            <person name="Davies R.M."/>
            <person name="Devlin K."/>
            <person name="Feltwell T."/>
            <person name="Gentles S."/>
            <person name="Hamlin N."/>
            <person name="Holroyd S."/>
            <person name="Hornsby T."/>
            <person name="Jagels K."/>
            <person name="Krogh A."/>
            <person name="McLean J."/>
            <person name="Moule S."/>
            <person name="Murphy L.D."/>
            <person name="Oliver S."/>
            <person name="Osborne J."/>
            <person name="Quail M.A."/>
            <person name="Rajandream M.A."/>
            <person name="Rogers J."/>
            <person name="Rutter S."/>
            <person name="Seeger K."/>
            <person name="Skelton S."/>
            <person name="Squares S."/>
            <person name="Squares R."/>
            <person name="Sulston J.E."/>
            <person name="Taylor K."/>
            <person name="Whitehead S."/>
            <person name="Barrell B.G."/>
        </authorList>
    </citation>
    <scope>NUCLEOTIDE SEQUENCE [LARGE SCALE GENOMIC DNA]</scope>
    <source>
        <strain>ATCC 25618 / H37Rv</strain>
    </source>
</reference>
<reference key="3">
    <citation type="journal article" date="2011" name="Mol. Cell. Proteomics">
        <title>Proteogenomic analysis of Mycobacterium tuberculosis by high resolution mass spectrometry.</title>
        <authorList>
            <person name="Kelkar D.S."/>
            <person name="Kumar D."/>
            <person name="Kumar P."/>
            <person name="Balakrishnan L."/>
            <person name="Muthusamy B."/>
            <person name="Yadav A.K."/>
            <person name="Shrivastava P."/>
            <person name="Marimuthu A."/>
            <person name="Anand S."/>
            <person name="Sundaram H."/>
            <person name="Kingsbury R."/>
            <person name="Harsha H.C."/>
            <person name="Nair B."/>
            <person name="Prasad T.S."/>
            <person name="Chauhan D.S."/>
            <person name="Katoch K."/>
            <person name="Katoch V.M."/>
            <person name="Kumar P."/>
            <person name="Chaerkady R."/>
            <person name="Ramachandran S."/>
            <person name="Dash D."/>
            <person name="Pandey A."/>
        </authorList>
    </citation>
    <scope>IDENTIFICATION BY MASS SPECTROMETRY [LARGE SCALE ANALYSIS]</scope>
    <source>
        <strain>ATCC 25618 / H37Rv</strain>
    </source>
</reference>
<reference key="4">
    <citation type="journal article" date="2011" name="Acta Crystallogr. F">
        <title>Cloning, expression, purification, crystallization and preliminary X-ray diffraction analysis of the regulatory domain of aspartokinase (Rv3709c) from Mycobacterium tuberculosis.</title>
        <authorList>
            <person name="Schuldt L."/>
            <person name="Suchowersky R."/>
            <person name="Veith K."/>
            <person name="Mueller-Dieckmann J."/>
            <person name="Weiss M.S."/>
        </authorList>
    </citation>
    <scope>X-RAY CRYSTALLOGRAPHY (1.63 ANGSTROMS)</scope>
    <scope>SUBUNIT</scope>
</reference>
<reference key="5">
    <citation type="journal article" date="2011" name="Protein Cell">
        <title>Structural view of the regulatory subunit of aspartate kinase from Mycobacterium tuberculosis.</title>
        <authorList>
            <person name="Yang Q."/>
            <person name="Yu K."/>
            <person name="Yan L."/>
            <person name="Li Y."/>
            <person name="Chen C."/>
            <person name="Li X."/>
        </authorList>
    </citation>
    <scope>X-RAY CRYSTALLOGRAPHY (2.6 ANGSTROMS) OF 250-421 IN COMPLEX WITH SUBSTRATE ANALOGS</scope>
    <scope>ACTIVITY REGULATION</scope>
    <scope>SUBUNIT</scope>
</reference>
<gene>
    <name type="primary">ask</name>
    <name type="ordered locus">Rv3709c</name>
    <name type="ORF">MTV025.057c</name>
</gene>
<name>AK_MYCTU</name>
<organism>
    <name type="scientific">Mycobacterium tuberculosis (strain ATCC 25618 / H37Rv)</name>
    <dbReference type="NCBI Taxonomy" id="83332"/>
    <lineage>
        <taxon>Bacteria</taxon>
        <taxon>Bacillati</taxon>
        <taxon>Actinomycetota</taxon>
        <taxon>Actinomycetes</taxon>
        <taxon>Mycobacteriales</taxon>
        <taxon>Mycobacteriaceae</taxon>
        <taxon>Mycobacterium</taxon>
        <taxon>Mycobacterium tuberculosis complex</taxon>
    </lineage>
</organism>
<feature type="chain" id="PRO_0000002385" description="Aspartokinase">
    <location>
        <begin position="1"/>
        <end position="421"/>
    </location>
</feature>
<feature type="domain" description="ACT 1" evidence="2">
    <location>
        <begin position="267"/>
        <end position="348"/>
    </location>
</feature>
<feature type="domain" description="ACT 2" evidence="2">
    <location>
        <begin position="349"/>
        <end position="421"/>
    </location>
</feature>
<feature type="binding site" evidence="1">
    <location>
        <begin position="7"/>
        <end position="10"/>
    </location>
    <ligand>
        <name>ATP</name>
        <dbReference type="ChEBI" id="CHEBI:30616"/>
    </ligand>
</feature>
<feature type="binding site">
    <location>
        <begin position="25"/>
        <end position="30"/>
    </location>
    <ligand>
        <name>substrate</name>
    </ligand>
</feature>
<feature type="binding site" evidence="1">
    <location>
        <position position="41"/>
    </location>
    <ligand>
        <name>ATP</name>
        <dbReference type="ChEBI" id="CHEBI:30616"/>
    </ligand>
</feature>
<feature type="binding site">
    <location>
        <begin position="45"/>
        <end position="49"/>
    </location>
    <ligand>
        <name>substrate</name>
    </ligand>
</feature>
<feature type="binding site" evidence="1">
    <location>
        <position position="74"/>
    </location>
    <ligand>
        <name>substrate</name>
    </ligand>
</feature>
<feature type="binding site">
    <location>
        <begin position="125"/>
        <end position="126"/>
    </location>
    <ligand>
        <name>substrate</name>
    </ligand>
</feature>
<feature type="binding site" evidence="1">
    <location>
        <begin position="151"/>
        <end position="154"/>
    </location>
    <ligand>
        <name>substrate</name>
    </ligand>
</feature>
<feature type="binding site" evidence="1">
    <location>
        <position position="154"/>
    </location>
    <ligand>
        <name>substrate</name>
    </ligand>
</feature>
<feature type="binding site" evidence="1">
    <location>
        <begin position="174"/>
        <end position="175"/>
    </location>
    <ligand>
        <name>ATP</name>
        <dbReference type="ChEBI" id="CHEBI:30616"/>
    </ligand>
</feature>
<feature type="binding site" evidence="1">
    <location>
        <begin position="180"/>
        <end position="185"/>
    </location>
    <ligand>
        <name>ATP</name>
        <dbReference type="ChEBI" id="CHEBI:30616"/>
    </ligand>
</feature>
<feature type="binding site" evidence="1">
    <location>
        <position position="210"/>
    </location>
    <ligand>
        <name>ATP</name>
        <dbReference type="ChEBI" id="CHEBI:30616"/>
    </ligand>
</feature>
<feature type="binding site" evidence="1">
    <location>
        <position position="274"/>
    </location>
    <ligand>
        <name>substrate</name>
    </ligand>
</feature>
<feature type="binding site" evidence="1">
    <location>
        <begin position="292"/>
        <end position="294"/>
    </location>
    <ligand>
        <name>substrate</name>
    </ligand>
</feature>
<feature type="binding site" evidence="1">
    <location>
        <position position="298"/>
    </location>
    <ligand>
        <name>substrate</name>
    </ligand>
</feature>
<feature type="binding site" evidence="1">
    <location>
        <begin position="360"/>
        <end position="361"/>
    </location>
    <ligand>
        <name>substrate</name>
    </ligand>
</feature>
<feature type="binding site" evidence="1">
    <location>
        <begin position="374"/>
        <end position="375"/>
    </location>
    <ligand>
        <name>substrate</name>
    </ligand>
</feature>
<feature type="binding site" evidence="1">
    <location>
        <begin position="381"/>
        <end position="382"/>
    </location>
    <ligand>
        <name>substrate</name>
    </ligand>
</feature>
<feature type="site" description="Contribution to the catalysis" evidence="1">
    <location>
        <position position="7"/>
    </location>
</feature>
<feature type="site" description="Contribution to the catalysis" evidence="1">
    <location>
        <position position="74"/>
    </location>
</feature>
<feature type="splice variant" id="VSP_018663" description="In isoform Beta." evidence="5">
    <location>
        <begin position="1"/>
        <end position="249"/>
    </location>
</feature>
<feature type="sequence conflict" description="In Ref. 1; AAB49995." evidence="5" ref="1">
    <original>DADVNIDMVLQNVSKVEDGKTDITFTCSRDVGPAAVEKLDSLRNEIGFS</original>
    <variation>RRRRQHRHGAAERLQGRGRQDRHHLHLLPQTSGPPPWKNWTRSETRSAST</variation>
    <location>
        <begin position="288"/>
        <end position="336"/>
    </location>
</feature>
<feature type="sequence conflict" description="In Ref. 1; AAB49995/AAB49994." evidence="5" ref="1">
    <original>IRISVLCRDTELDKAVVALHEAFGLGGDEEATVYAGTGR</original>
    <variation>DQRSRCCAATPNWTRPWSRCMKRSGSAATRRPRCTRGRDGRWACQ</variation>
    <location>
        <begin position="383"/>
        <end position="421"/>
    </location>
</feature>
<feature type="strand" evidence="6">
    <location>
        <begin position="254"/>
        <end position="261"/>
    </location>
</feature>
<feature type="strand" evidence="6">
    <location>
        <begin position="263"/>
        <end position="275"/>
    </location>
</feature>
<feature type="helix" evidence="6">
    <location>
        <begin position="278"/>
        <end position="288"/>
    </location>
</feature>
<feature type="strand" evidence="6">
    <location>
        <begin position="296"/>
        <end position="298"/>
    </location>
</feature>
<feature type="turn" evidence="6">
    <location>
        <begin position="303"/>
        <end position="305"/>
    </location>
</feature>
<feature type="strand" evidence="6">
    <location>
        <begin position="307"/>
        <end position="315"/>
    </location>
</feature>
<feature type="turn" evidence="6">
    <location>
        <begin position="316"/>
        <end position="318"/>
    </location>
</feature>
<feature type="helix" evidence="6">
    <location>
        <begin position="319"/>
        <end position="328"/>
    </location>
</feature>
<feature type="helix" evidence="6">
    <location>
        <begin position="330"/>
        <end position="333"/>
    </location>
</feature>
<feature type="strand" evidence="6">
    <location>
        <begin position="336"/>
        <end position="342"/>
    </location>
</feature>
<feature type="strand" evidence="6">
    <location>
        <begin position="344"/>
        <end position="352"/>
    </location>
</feature>
<feature type="helix" evidence="7">
    <location>
        <begin position="354"/>
        <end position="356"/>
    </location>
</feature>
<feature type="helix" evidence="6">
    <location>
        <begin position="358"/>
        <end position="370"/>
    </location>
</feature>
<feature type="strand" evidence="6">
    <location>
        <begin position="377"/>
        <end position="381"/>
    </location>
</feature>
<feature type="strand" evidence="6">
    <location>
        <begin position="384"/>
        <end position="390"/>
    </location>
</feature>
<feature type="helix" evidence="6">
    <location>
        <begin position="391"/>
        <end position="393"/>
    </location>
</feature>
<feature type="helix" evidence="6">
    <location>
        <begin position="394"/>
        <end position="405"/>
    </location>
</feature>
<feature type="strand" evidence="6">
    <location>
        <begin position="418"/>
        <end position="420"/>
    </location>
</feature>
<sequence length="421" mass="44462">MALVVQKYGGSSVADAERIRRVAERIVATKKQGNDVVVVVSAMGDTTDDLLDLAQQVCPAPPPRELDMLLTAGERISNALVAMAIESLGAHARSFTGSQAGVITTGTHGNAKIIDVTPGRLQTALEEGRVVLVAGFQGVSQDTKDVTTLGRGGSDTTAVAMAAALGADVCEIYTDVDGIFSADPRIVRNARKLDTVTFEEMLEMAACGAKVLMLRCVEYARRHNIPVHVRSSYSDRPGTVVVGSIKDVPMEDPILTGVAHDRSEAKVTIVGLPDIPGYAAKVFRAVADADVNIDMVLQNVSKVEDGKTDITFTCSRDVGPAAVEKLDSLRNEIGFSQLLYDDHIGKVSLIGAGMRSHPGVTATFCEALAAVGVNIELISTSEIRISVLCRDTELDKAVVALHEAFGLGGDEEATVYAGTGR</sequence>
<comment type="function">
    <text evidence="1">Catalyzes the phosphorylation of the beta-carboxyl group of aspartic acid with ATP to yield 4-phospho-L-aspartate, which is involved in the branched biosynthetic pathway leading to the biosynthesis of amino acids lysine, threonine, isoleucine and methionine.</text>
</comment>
<comment type="catalytic activity">
    <reaction>
        <text>L-aspartate + ATP = 4-phospho-L-aspartate + ADP</text>
        <dbReference type="Rhea" id="RHEA:23776"/>
        <dbReference type="ChEBI" id="CHEBI:29991"/>
        <dbReference type="ChEBI" id="CHEBI:30616"/>
        <dbReference type="ChEBI" id="CHEBI:57535"/>
        <dbReference type="ChEBI" id="CHEBI:456216"/>
        <dbReference type="EC" id="2.7.2.4"/>
    </reaction>
</comment>
<comment type="activity regulation">
    <text evidence="4">Feedback inhibition by threonine.</text>
</comment>
<comment type="pathway">
    <text>Amino-acid biosynthesis; L-lysine biosynthesis via DAP pathway; (S)-tetrahydrodipicolinate from L-aspartate: step 1/4.</text>
</comment>
<comment type="pathway">
    <text>Amino-acid biosynthesis; L-methionine biosynthesis via de novo pathway; L-homoserine from L-aspartate: step 1/3.</text>
</comment>
<comment type="pathway">
    <text>Amino-acid biosynthesis; L-threonine biosynthesis; L-threonine from L-aspartate: step 1/5.</text>
</comment>
<comment type="subunit">
    <text evidence="3 4">Heterotetramer consisting of 2 isoforms Alpha (catalytic and regulation) and of a homodimer of 2 isoforms Beta (regulation).</text>
</comment>
<comment type="alternative products">
    <event type="alternative initiation"/>
    <isoform>
        <id>P9WPX3-1</id>
        <name>Alpha</name>
        <name>Aspartokinase subunit alpha</name>
        <sequence type="displayed"/>
    </isoform>
    <isoform>
        <id>P9WPX3-2</id>
        <name>Beta</name>
        <name>Aspartokinase subunit beta</name>
        <sequence type="described" ref="VSP_018663"/>
    </isoform>
</comment>
<comment type="similarity">
    <text evidence="5">Belongs to the aspartokinase family.</text>
</comment>
<protein>
    <recommendedName>
        <fullName>Aspartokinase</fullName>
        <ecNumber>2.7.2.4</ecNumber>
    </recommendedName>
    <alternativeName>
        <fullName>Aspartate kinase</fullName>
        <shortName>ASK</shortName>
    </alternativeName>
</protein>